<reference key="1">
    <citation type="journal article" date="2000" name="Genomics">
        <title>Organization and conservation of the GART/SON/DONSON locus in mouse and human genomes.</title>
        <authorList>
            <person name="Wynn S.L."/>
            <person name="Fisher R.A."/>
            <person name="Pagel C."/>
            <person name="Price M."/>
            <person name="Liu Q.Y."/>
            <person name="Khan I.M."/>
            <person name="Zammit P."/>
            <person name="Dadrah K."/>
            <person name="Mazrani W."/>
            <person name="Kessling A."/>
            <person name="Lee J.S."/>
            <person name="Buluwela L."/>
        </authorList>
    </citation>
    <scope>NUCLEOTIDE SEQUENCE [GENOMIC DNA] (ISOFORMS 2 AND 3)</scope>
    <scope>NUCLEOTIDE SEQUENCE [MRNA] OF 1-2125 (ISOFORM 3)</scope>
    <scope>SUBCELLULAR LOCATION</scope>
    <source>
        <strain>129/Sv</strain>
    </source>
</reference>
<reference key="2">
    <citation type="journal article" date="2010" name="J. Biol. Chem.">
        <title>Regulation of ghrelin signaling by a leptin-induced gene, negative regulatory element-binding protein, in the hypothalamic neurons.</title>
        <authorList>
            <person name="Komori T."/>
            <person name="Doi A."/>
            <person name="Furuta H."/>
            <person name="Wakao H."/>
            <person name="Nakao N."/>
            <person name="Nakazato M."/>
            <person name="Nanjo K."/>
            <person name="Senba E."/>
            <person name="Morikawa Y."/>
        </authorList>
    </citation>
    <scope>NUCLEOTIDE SEQUENCE [MRNA] (ISOFORM 4)</scope>
    <scope>FUNCTION</scope>
    <scope>TISSUE SPECIFICITY</scope>
    <scope>INDUCTION</scope>
</reference>
<reference key="3">
    <citation type="journal article" date="2009" name="PLoS Biol.">
        <title>Lineage-specific biology revealed by a finished genome assembly of the mouse.</title>
        <authorList>
            <person name="Church D.M."/>
            <person name="Goodstadt L."/>
            <person name="Hillier L.W."/>
            <person name="Zody M.C."/>
            <person name="Goldstein S."/>
            <person name="She X."/>
            <person name="Bult C.J."/>
            <person name="Agarwala R."/>
            <person name="Cherry J.L."/>
            <person name="DiCuccio M."/>
            <person name="Hlavina W."/>
            <person name="Kapustin Y."/>
            <person name="Meric P."/>
            <person name="Maglott D."/>
            <person name="Birtle Z."/>
            <person name="Marques A.C."/>
            <person name="Graves T."/>
            <person name="Zhou S."/>
            <person name="Teague B."/>
            <person name="Potamousis K."/>
            <person name="Churas C."/>
            <person name="Place M."/>
            <person name="Herschleb J."/>
            <person name="Runnheim R."/>
            <person name="Forrest D."/>
            <person name="Amos-Landgraf J."/>
            <person name="Schwartz D.C."/>
            <person name="Cheng Z."/>
            <person name="Lindblad-Toh K."/>
            <person name="Eichler E.E."/>
            <person name="Ponting C.P."/>
        </authorList>
    </citation>
    <scope>NUCLEOTIDE SEQUENCE [LARGE SCALE GENOMIC DNA]</scope>
    <source>
        <strain>C57BL/6J</strain>
    </source>
</reference>
<reference key="4">
    <citation type="journal article" date="2004" name="Genome Res.">
        <title>The status, quality, and expansion of the NIH full-length cDNA project: the Mammalian Gene Collection (MGC).</title>
        <authorList>
            <consortium name="The MGC Project Team"/>
        </authorList>
    </citation>
    <scope>NUCLEOTIDE SEQUENCE [LARGE SCALE MRNA] OF 1-1827 (ISOFORM 1)</scope>
    <source>
        <strain>FVB/N</strain>
        <tissue>Kidney</tissue>
    </source>
</reference>
<reference key="5">
    <citation type="journal article" date="2005" name="Science">
        <title>The transcriptional landscape of the mammalian genome.</title>
        <authorList>
            <person name="Carninci P."/>
            <person name="Kasukawa T."/>
            <person name="Katayama S."/>
            <person name="Gough J."/>
            <person name="Frith M.C."/>
            <person name="Maeda N."/>
            <person name="Oyama R."/>
            <person name="Ravasi T."/>
            <person name="Lenhard B."/>
            <person name="Wells C."/>
            <person name="Kodzius R."/>
            <person name="Shimokawa K."/>
            <person name="Bajic V.B."/>
            <person name="Brenner S.E."/>
            <person name="Batalov S."/>
            <person name="Forrest A.R."/>
            <person name="Zavolan M."/>
            <person name="Davis M.J."/>
            <person name="Wilming L.G."/>
            <person name="Aidinis V."/>
            <person name="Allen J.E."/>
            <person name="Ambesi-Impiombato A."/>
            <person name="Apweiler R."/>
            <person name="Aturaliya R.N."/>
            <person name="Bailey T.L."/>
            <person name="Bansal M."/>
            <person name="Baxter L."/>
            <person name="Beisel K.W."/>
            <person name="Bersano T."/>
            <person name="Bono H."/>
            <person name="Chalk A.M."/>
            <person name="Chiu K.P."/>
            <person name="Choudhary V."/>
            <person name="Christoffels A."/>
            <person name="Clutterbuck D.R."/>
            <person name="Crowe M.L."/>
            <person name="Dalla E."/>
            <person name="Dalrymple B.P."/>
            <person name="de Bono B."/>
            <person name="Della Gatta G."/>
            <person name="di Bernardo D."/>
            <person name="Down T."/>
            <person name="Engstrom P."/>
            <person name="Fagiolini M."/>
            <person name="Faulkner G."/>
            <person name="Fletcher C.F."/>
            <person name="Fukushima T."/>
            <person name="Furuno M."/>
            <person name="Futaki S."/>
            <person name="Gariboldi M."/>
            <person name="Georgii-Hemming P."/>
            <person name="Gingeras T.R."/>
            <person name="Gojobori T."/>
            <person name="Green R.E."/>
            <person name="Gustincich S."/>
            <person name="Harbers M."/>
            <person name="Hayashi Y."/>
            <person name="Hensch T.K."/>
            <person name="Hirokawa N."/>
            <person name="Hill D."/>
            <person name="Huminiecki L."/>
            <person name="Iacono M."/>
            <person name="Ikeo K."/>
            <person name="Iwama A."/>
            <person name="Ishikawa T."/>
            <person name="Jakt M."/>
            <person name="Kanapin A."/>
            <person name="Katoh M."/>
            <person name="Kawasawa Y."/>
            <person name="Kelso J."/>
            <person name="Kitamura H."/>
            <person name="Kitano H."/>
            <person name="Kollias G."/>
            <person name="Krishnan S.P."/>
            <person name="Kruger A."/>
            <person name="Kummerfeld S.K."/>
            <person name="Kurochkin I.V."/>
            <person name="Lareau L.F."/>
            <person name="Lazarevic D."/>
            <person name="Lipovich L."/>
            <person name="Liu J."/>
            <person name="Liuni S."/>
            <person name="McWilliam S."/>
            <person name="Madan Babu M."/>
            <person name="Madera M."/>
            <person name="Marchionni L."/>
            <person name="Matsuda H."/>
            <person name="Matsuzawa S."/>
            <person name="Miki H."/>
            <person name="Mignone F."/>
            <person name="Miyake S."/>
            <person name="Morris K."/>
            <person name="Mottagui-Tabar S."/>
            <person name="Mulder N."/>
            <person name="Nakano N."/>
            <person name="Nakauchi H."/>
            <person name="Ng P."/>
            <person name="Nilsson R."/>
            <person name="Nishiguchi S."/>
            <person name="Nishikawa S."/>
            <person name="Nori F."/>
            <person name="Ohara O."/>
            <person name="Okazaki Y."/>
            <person name="Orlando V."/>
            <person name="Pang K.C."/>
            <person name="Pavan W.J."/>
            <person name="Pavesi G."/>
            <person name="Pesole G."/>
            <person name="Petrovsky N."/>
            <person name="Piazza S."/>
            <person name="Reed J."/>
            <person name="Reid J.F."/>
            <person name="Ring B.Z."/>
            <person name="Ringwald M."/>
            <person name="Rost B."/>
            <person name="Ruan Y."/>
            <person name="Salzberg S.L."/>
            <person name="Sandelin A."/>
            <person name="Schneider C."/>
            <person name="Schoenbach C."/>
            <person name="Sekiguchi K."/>
            <person name="Semple C.A."/>
            <person name="Seno S."/>
            <person name="Sessa L."/>
            <person name="Sheng Y."/>
            <person name="Shibata Y."/>
            <person name="Shimada H."/>
            <person name="Shimada K."/>
            <person name="Silva D."/>
            <person name="Sinclair B."/>
            <person name="Sperling S."/>
            <person name="Stupka E."/>
            <person name="Sugiura K."/>
            <person name="Sultana R."/>
            <person name="Takenaka Y."/>
            <person name="Taki K."/>
            <person name="Tammoja K."/>
            <person name="Tan S.L."/>
            <person name="Tang S."/>
            <person name="Taylor M.S."/>
            <person name="Tegner J."/>
            <person name="Teichmann S.A."/>
            <person name="Ueda H.R."/>
            <person name="van Nimwegen E."/>
            <person name="Verardo R."/>
            <person name="Wei C.L."/>
            <person name="Yagi K."/>
            <person name="Yamanishi H."/>
            <person name="Zabarovsky E."/>
            <person name="Zhu S."/>
            <person name="Zimmer A."/>
            <person name="Hide W."/>
            <person name="Bult C."/>
            <person name="Grimmond S.M."/>
            <person name="Teasdale R.D."/>
            <person name="Liu E.T."/>
            <person name="Brusic V."/>
            <person name="Quackenbush J."/>
            <person name="Wahlestedt C."/>
            <person name="Mattick J.S."/>
            <person name="Hume D.A."/>
            <person name="Kai C."/>
            <person name="Sasaki D."/>
            <person name="Tomaru Y."/>
            <person name="Fukuda S."/>
            <person name="Kanamori-Katayama M."/>
            <person name="Suzuki M."/>
            <person name="Aoki J."/>
            <person name="Arakawa T."/>
            <person name="Iida J."/>
            <person name="Imamura K."/>
            <person name="Itoh M."/>
            <person name="Kato T."/>
            <person name="Kawaji H."/>
            <person name="Kawagashira N."/>
            <person name="Kawashima T."/>
            <person name="Kojima M."/>
            <person name="Kondo S."/>
            <person name="Konno H."/>
            <person name="Nakano K."/>
            <person name="Ninomiya N."/>
            <person name="Nishio T."/>
            <person name="Okada M."/>
            <person name="Plessy C."/>
            <person name="Shibata K."/>
            <person name="Shiraki T."/>
            <person name="Suzuki S."/>
            <person name="Tagami M."/>
            <person name="Waki K."/>
            <person name="Watahiki A."/>
            <person name="Okamura-Oho Y."/>
            <person name="Suzuki H."/>
            <person name="Kawai J."/>
            <person name="Hayashizaki Y."/>
        </authorList>
    </citation>
    <scope>NUCLEOTIDE SEQUENCE [LARGE SCALE MRNA] OF 1-116</scope>
    <source>
        <strain>C57BL/6J</strain>
        <tissue>Hippocampus</tissue>
        <tissue>Small intestine</tissue>
        <tissue>Tongue</tissue>
    </source>
</reference>
<reference key="6">
    <citation type="journal article" date="2007" name="Proc. Natl. Acad. Sci. U.S.A.">
        <title>Large-scale phosphorylation analysis of mouse liver.</title>
        <authorList>
            <person name="Villen J."/>
            <person name="Beausoleil S.A."/>
            <person name="Gerber S.A."/>
            <person name="Gygi S.P."/>
        </authorList>
    </citation>
    <scope>PHOSPHORYLATION [LARGE SCALE ANALYSIS] AT SER-1723</scope>
    <scope>IDENTIFICATION BY MASS SPECTROMETRY [LARGE SCALE ANALYSIS]</scope>
    <source>
        <tissue>Liver</tissue>
    </source>
</reference>
<reference key="7">
    <citation type="journal article" date="2009" name="Immunity">
        <title>The phagosomal proteome in interferon-gamma-activated macrophages.</title>
        <authorList>
            <person name="Trost M."/>
            <person name="English L."/>
            <person name="Lemieux S."/>
            <person name="Courcelles M."/>
            <person name="Desjardins M."/>
            <person name="Thibault P."/>
        </authorList>
    </citation>
    <scope>PHOSPHORYLATION [LARGE SCALE ANALYSIS] AT SER-1723</scope>
    <scope>IDENTIFICATION BY MASS SPECTROMETRY [LARGE SCALE ANALYSIS]</scope>
</reference>
<reference key="8">
    <citation type="journal article" date="2010" name="Cell">
        <title>A tissue-specific atlas of mouse protein phosphorylation and expression.</title>
        <authorList>
            <person name="Huttlin E.L."/>
            <person name="Jedrychowski M.P."/>
            <person name="Elias J.E."/>
            <person name="Goswami T."/>
            <person name="Rad R."/>
            <person name="Beausoleil S.A."/>
            <person name="Villen J."/>
            <person name="Haas W."/>
            <person name="Sowa M.E."/>
            <person name="Gygi S.P."/>
        </authorList>
    </citation>
    <scope>PHOSPHORYLATION [LARGE SCALE ANALYSIS] AT SER-993; SER-1723; SER-2147 AND SER-2256</scope>
    <scope>IDENTIFICATION BY MASS SPECTROMETRY [LARGE SCALE ANALYSIS]</scope>
    <source>
        <tissue>Brain</tissue>
        <tissue>Kidney</tissue>
        <tissue>Liver</tissue>
        <tissue>Lung</tissue>
        <tissue>Spleen</tissue>
        <tissue>Testis</tissue>
    </source>
</reference>
<reference key="9">
    <citation type="journal article" date="2013" name="Mol. Cell">
        <title>SIRT5-mediated lysine desuccinylation impacts diverse metabolic pathways.</title>
        <authorList>
            <person name="Park J."/>
            <person name="Chen Y."/>
            <person name="Tishkoff D.X."/>
            <person name="Peng C."/>
            <person name="Tan M."/>
            <person name="Dai L."/>
            <person name="Xie Z."/>
            <person name="Zhang Y."/>
            <person name="Zwaans B.M."/>
            <person name="Skinner M.E."/>
            <person name="Lombard D.B."/>
            <person name="Zhao Y."/>
        </authorList>
    </citation>
    <scope>ACETYLATION [LARGE SCALE ANALYSIS] AT LYS-2073</scope>
    <scope>IDENTIFICATION BY MASS SPECTROMETRY [LARGE SCALE ANALYSIS]</scope>
    <source>
        <tissue>Embryonic fibroblast</tissue>
    </source>
</reference>
<reference key="10">
    <citation type="journal article" date="2014" name="Mol. Cell. Proteomics">
        <title>Immunoaffinity enrichment and mass spectrometry analysis of protein methylation.</title>
        <authorList>
            <person name="Guo A."/>
            <person name="Gu H."/>
            <person name="Zhou J."/>
            <person name="Mulhern D."/>
            <person name="Wang Y."/>
            <person name="Lee K.A."/>
            <person name="Yang V."/>
            <person name="Aguiar M."/>
            <person name="Kornhauser J."/>
            <person name="Jia X."/>
            <person name="Ren J."/>
            <person name="Beausoleil S.A."/>
            <person name="Silva J.C."/>
            <person name="Vemulapalli V."/>
            <person name="Bedford M.T."/>
            <person name="Comb M.J."/>
        </authorList>
    </citation>
    <scope>METHYLATION [LARGE SCALE ANALYSIS] AT ARG-1002 AND ARG-1017</scope>
    <scope>IDENTIFICATION BY MASS SPECTROMETRY [LARGE SCALE ANALYSIS]</scope>
    <source>
        <tissue>Embryo</tissue>
    </source>
</reference>
<evidence type="ECO:0000250" key="1">
    <source>
        <dbReference type="UniProtKB" id="P18583"/>
    </source>
</evidence>
<evidence type="ECO:0000255" key="2">
    <source>
        <dbReference type="PROSITE-ProRule" id="PRU00092"/>
    </source>
</evidence>
<evidence type="ECO:0000255" key="3">
    <source>
        <dbReference type="PROSITE-ProRule" id="PRU00266"/>
    </source>
</evidence>
<evidence type="ECO:0000256" key="4">
    <source>
        <dbReference type="SAM" id="MobiDB-lite"/>
    </source>
</evidence>
<evidence type="ECO:0000269" key="5">
    <source>
    </source>
</evidence>
<evidence type="ECO:0000303" key="6">
    <source>
    </source>
</evidence>
<evidence type="ECO:0000303" key="7">
    <source>
    </source>
</evidence>
<evidence type="ECO:0000305" key="8"/>
<evidence type="ECO:0007744" key="9">
    <source>
    </source>
</evidence>
<evidence type="ECO:0007744" key="10">
    <source>
    </source>
</evidence>
<evidence type="ECO:0007744" key="11">
    <source>
    </source>
</evidence>
<evidence type="ECO:0007744" key="12">
    <source>
    </source>
</evidence>
<evidence type="ECO:0007744" key="13">
    <source>
    </source>
</evidence>
<keyword id="KW-0007">Acetylation</keyword>
<keyword id="KW-0025">Alternative splicing</keyword>
<keyword id="KW-0131">Cell cycle</keyword>
<keyword id="KW-0238">DNA-binding</keyword>
<keyword id="KW-1017">Isopeptide bond</keyword>
<keyword id="KW-0488">Methylation</keyword>
<keyword id="KW-0507">mRNA processing</keyword>
<keyword id="KW-0508">mRNA splicing</keyword>
<keyword id="KW-0539">Nucleus</keyword>
<keyword id="KW-0597">Phosphoprotein</keyword>
<keyword id="KW-1185">Reference proteome</keyword>
<keyword id="KW-0677">Repeat</keyword>
<keyword id="KW-0694">RNA-binding</keyword>
<keyword id="KW-0804">Transcription</keyword>
<keyword id="KW-0805">Transcription regulation</keyword>
<keyword id="KW-0832">Ubl conjugation</keyword>
<dbReference type="EMBL" id="AF193606">
    <property type="protein sequence ID" value="AAF23120.1"/>
    <property type="molecule type" value="Genomic_DNA"/>
</dbReference>
<dbReference type="EMBL" id="AF193595">
    <property type="protein sequence ID" value="AAF23120.1"/>
    <property type="status" value="JOINED"/>
    <property type="molecule type" value="Genomic_DNA"/>
</dbReference>
<dbReference type="EMBL" id="AF193596">
    <property type="protein sequence ID" value="AAF23120.1"/>
    <property type="status" value="JOINED"/>
    <property type="molecule type" value="Genomic_DNA"/>
</dbReference>
<dbReference type="EMBL" id="AF193597">
    <property type="protein sequence ID" value="AAF23120.1"/>
    <property type="status" value="JOINED"/>
    <property type="molecule type" value="Genomic_DNA"/>
</dbReference>
<dbReference type="EMBL" id="AF193598">
    <property type="protein sequence ID" value="AAF23120.1"/>
    <property type="status" value="JOINED"/>
    <property type="molecule type" value="Genomic_DNA"/>
</dbReference>
<dbReference type="EMBL" id="AF193599">
    <property type="protein sequence ID" value="AAF23120.1"/>
    <property type="status" value="JOINED"/>
    <property type="molecule type" value="Genomic_DNA"/>
</dbReference>
<dbReference type="EMBL" id="AF193600">
    <property type="protein sequence ID" value="AAF23120.1"/>
    <property type="status" value="JOINED"/>
    <property type="molecule type" value="Genomic_DNA"/>
</dbReference>
<dbReference type="EMBL" id="AF193601">
    <property type="protein sequence ID" value="AAF23120.1"/>
    <property type="status" value="JOINED"/>
    <property type="molecule type" value="Genomic_DNA"/>
</dbReference>
<dbReference type="EMBL" id="AF193602">
    <property type="protein sequence ID" value="AAF23120.1"/>
    <property type="status" value="JOINED"/>
    <property type="molecule type" value="Genomic_DNA"/>
</dbReference>
<dbReference type="EMBL" id="AF193603">
    <property type="protein sequence ID" value="AAF23120.1"/>
    <property type="status" value="JOINED"/>
    <property type="molecule type" value="Genomic_DNA"/>
</dbReference>
<dbReference type="EMBL" id="AF193604">
    <property type="protein sequence ID" value="AAF23120.1"/>
    <property type="status" value="JOINED"/>
    <property type="molecule type" value="Genomic_DNA"/>
</dbReference>
<dbReference type="EMBL" id="AF193605">
    <property type="protein sequence ID" value="AAF23120.1"/>
    <property type="status" value="JOINED"/>
    <property type="molecule type" value="Genomic_DNA"/>
</dbReference>
<dbReference type="EMBL" id="AF193607">
    <property type="protein sequence ID" value="AAF23121.1"/>
    <property type="molecule type" value="mRNA"/>
</dbReference>
<dbReference type="EMBL" id="AB546195">
    <property type="protein sequence ID" value="BAJ40169.1"/>
    <property type="molecule type" value="mRNA"/>
</dbReference>
<dbReference type="EMBL" id="AC131691">
    <property type="status" value="NOT_ANNOTATED_CDS"/>
    <property type="molecule type" value="Genomic_DNA"/>
</dbReference>
<dbReference type="EMBL" id="BC046419">
    <property type="protein sequence ID" value="AAH46419.1"/>
    <property type="status" value="ALT_SEQ"/>
    <property type="molecule type" value="mRNA"/>
</dbReference>
<dbReference type="EMBL" id="AK019312">
    <property type="protein sequence ID" value="BAB31659.1"/>
    <property type="molecule type" value="mRNA"/>
</dbReference>
<dbReference type="EMBL" id="AK019081">
    <property type="protein sequence ID" value="BAB31536.1"/>
    <property type="molecule type" value="mRNA"/>
</dbReference>
<dbReference type="EMBL" id="AK008478">
    <property type="protein sequence ID" value="BAB25691.1"/>
    <property type="molecule type" value="mRNA"/>
</dbReference>
<dbReference type="EMBL" id="AK008256">
    <property type="protein sequence ID" value="BAB25562.1"/>
    <property type="molecule type" value="mRNA"/>
</dbReference>
<dbReference type="CCDS" id="CCDS37399.1">
    <molecule id="Q9QX47-1"/>
</dbReference>
<dbReference type="CCDS" id="CCDS37400.1">
    <molecule id="Q9QX47-2"/>
</dbReference>
<dbReference type="RefSeq" id="NP_064357.2">
    <molecule id="Q9QX47-2"/>
    <property type="nucleotide sequence ID" value="NM_019973.2"/>
</dbReference>
<dbReference type="RefSeq" id="NP_849211.3">
    <molecule id="Q9QX47-1"/>
    <property type="nucleotide sequence ID" value="NM_178880.4"/>
</dbReference>
<dbReference type="BioGRID" id="203390">
    <property type="interactions" value="11"/>
</dbReference>
<dbReference type="DIP" id="DIP-49510N"/>
<dbReference type="FunCoup" id="Q9QX47">
    <property type="interactions" value="2788"/>
</dbReference>
<dbReference type="IntAct" id="Q9QX47">
    <property type="interactions" value="6"/>
</dbReference>
<dbReference type="MINT" id="Q9QX47"/>
<dbReference type="STRING" id="10090.ENSMUSP00000109671"/>
<dbReference type="GlyGen" id="Q9QX47">
    <property type="glycosylation" value="13 sites, 1 N-linked glycan (1 site), 1 O-linked glycan (8 sites)"/>
</dbReference>
<dbReference type="iPTMnet" id="Q9QX47"/>
<dbReference type="PhosphoSitePlus" id="Q9QX47"/>
<dbReference type="SwissPalm" id="Q9QX47"/>
<dbReference type="jPOST" id="Q9QX47"/>
<dbReference type="PaxDb" id="10090-ENSMUSP00000109671"/>
<dbReference type="PeptideAtlas" id="Q9QX47"/>
<dbReference type="ProteomicsDB" id="261108">
    <molecule id="Q9QX47-1"/>
</dbReference>
<dbReference type="ProteomicsDB" id="261109">
    <molecule id="Q9QX47-2"/>
</dbReference>
<dbReference type="ProteomicsDB" id="261110">
    <molecule id="Q9QX47-3"/>
</dbReference>
<dbReference type="ProteomicsDB" id="261111">
    <molecule id="Q9QX47-4"/>
</dbReference>
<dbReference type="Pumba" id="Q9QX47"/>
<dbReference type="Antibodypedia" id="7410">
    <property type="antibodies" value="63 antibodies from 19 providers"/>
</dbReference>
<dbReference type="DNASU" id="20658"/>
<dbReference type="Ensembl" id="ENSMUST00000114036.9">
    <molecule id="Q9QX47-2"/>
    <property type="protein sequence ID" value="ENSMUSP00000109670.3"/>
    <property type="gene ID" value="ENSMUSG00000022961.19"/>
</dbReference>
<dbReference type="Ensembl" id="ENSMUST00000114037.9">
    <molecule id="Q9QX47-1"/>
    <property type="protein sequence ID" value="ENSMUSP00000109671.3"/>
    <property type="gene ID" value="ENSMUSG00000022961.19"/>
</dbReference>
<dbReference type="GeneID" id="20658"/>
<dbReference type="KEGG" id="mmu:20658"/>
<dbReference type="UCSC" id="uc007zxy.1">
    <molecule id="Q9QX47-2"/>
    <property type="organism name" value="mouse"/>
</dbReference>
<dbReference type="UCSC" id="uc007zxz.1">
    <molecule id="Q9QX47-1"/>
    <property type="organism name" value="mouse"/>
</dbReference>
<dbReference type="AGR" id="MGI:98353"/>
<dbReference type="CTD" id="6651"/>
<dbReference type="MGI" id="MGI:98353">
    <property type="gene designation" value="Son"/>
</dbReference>
<dbReference type="VEuPathDB" id="HostDB:ENSMUSG00000022961"/>
<dbReference type="eggNOG" id="ENOG502QPQ7">
    <property type="taxonomic scope" value="Eukaryota"/>
</dbReference>
<dbReference type="GeneTree" id="ENSGT00730000111141"/>
<dbReference type="HOGENOM" id="CLU_230016_0_0_1"/>
<dbReference type="InParanoid" id="Q9QX47"/>
<dbReference type="OMA" id="NETEQCT"/>
<dbReference type="OrthoDB" id="51181at9989"/>
<dbReference type="TreeFam" id="TF330344"/>
<dbReference type="BioGRID-ORCS" id="20658">
    <property type="hits" value="9 hits in 59 CRISPR screens"/>
</dbReference>
<dbReference type="ChiTaRS" id="Son">
    <property type="organism name" value="mouse"/>
</dbReference>
<dbReference type="PRO" id="PR:Q9QX47"/>
<dbReference type="Proteomes" id="UP000000589">
    <property type="component" value="Chromosome 16"/>
</dbReference>
<dbReference type="RNAct" id="Q9QX47">
    <property type="molecule type" value="protein"/>
</dbReference>
<dbReference type="Bgee" id="ENSMUSG00000022961">
    <property type="expression patterns" value="Expressed in aorta tunica media and 278 other cell types or tissues"/>
</dbReference>
<dbReference type="ExpressionAtlas" id="Q9QX47">
    <property type="expression patterns" value="baseline and differential"/>
</dbReference>
<dbReference type="GO" id="GO:0016607">
    <property type="term" value="C:nuclear speck"/>
    <property type="evidence" value="ECO:0000250"/>
    <property type="project" value="UniProtKB"/>
</dbReference>
<dbReference type="GO" id="GO:0003677">
    <property type="term" value="F:DNA binding"/>
    <property type="evidence" value="ECO:0007669"/>
    <property type="project" value="UniProtKB-KW"/>
</dbReference>
<dbReference type="GO" id="GO:0003723">
    <property type="term" value="F:RNA binding"/>
    <property type="evidence" value="ECO:0000250"/>
    <property type="project" value="UniProtKB"/>
</dbReference>
<dbReference type="GO" id="GO:0050733">
    <property type="term" value="F:RS domain binding"/>
    <property type="evidence" value="ECO:0000353"/>
    <property type="project" value="MGI"/>
</dbReference>
<dbReference type="GO" id="GO:0000226">
    <property type="term" value="P:microtubule cytoskeleton organization"/>
    <property type="evidence" value="ECO:0000250"/>
    <property type="project" value="UniProtKB"/>
</dbReference>
<dbReference type="GO" id="GO:0000281">
    <property type="term" value="P:mitotic cytokinesis"/>
    <property type="evidence" value="ECO:0000250"/>
    <property type="project" value="UniProtKB"/>
</dbReference>
<dbReference type="GO" id="GO:0006397">
    <property type="term" value="P:mRNA processing"/>
    <property type="evidence" value="ECO:0000250"/>
    <property type="project" value="UniProtKB"/>
</dbReference>
<dbReference type="GO" id="GO:0051726">
    <property type="term" value="P:regulation of cell cycle"/>
    <property type="evidence" value="ECO:0000250"/>
    <property type="project" value="UniProtKB"/>
</dbReference>
<dbReference type="GO" id="GO:0048024">
    <property type="term" value="P:regulation of mRNA splicing, via spliceosome"/>
    <property type="evidence" value="ECO:0000250"/>
    <property type="project" value="UniProtKB"/>
</dbReference>
<dbReference type="GO" id="GO:0008380">
    <property type="term" value="P:RNA splicing"/>
    <property type="evidence" value="ECO:0007669"/>
    <property type="project" value="UniProtKB-KW"/>
</dbReference>
<dbReference type="CDD" id="cd19870">
    <property type="entry name" value="DSRM_SON-like"/>
    <property type="match status" value="1"/>
</dbReference>
<dbReference type="FunFam" id="3.30.160.20:FF:000042">
    <property type="entry name" value="SON DNA binding protein"/>
    <property type="match status" value="1"/>
</dbReference>
<dbReference type="Gene3D" id="3.30.160.20">
    <property type="match status" value="1"/>
</dbReference>
<dbReference type="InterPro" id="IPR014720">
    <property type="entry name" value="dsRBD_dom"/>
</dbReference>
<dbReference type="InterPro" id="IPR000467">
    <property type="entry name" value="G_patch_dom"/>
</dbReference>
<dbReference type="InterPro" id="IPR032922">
    <property type="entry name" value="SON"/>
</dbReference>
<dbReference type="InterPro" id="IPR036322">
    <property type="entry name" value="WD40_repeat_dom_sf"/>
</dbReference>
<dbReference type="PANTHER" id="PTHR46528">
    <property type="entry name" value="PROTEIN SON"/>
    <property type="match status" value="1"/>
</dbReference>
<dbReference type="PANTHER" id="PTHR46528:SF1">
    <property type="entry name" value="PROTEIN SON"/>
    <property type="match status" value="1"/>
</dbReference>
<dbReference type="Pfam" id="PF14709">
    <property type="entry name" value="DND1_DSRM"/>
    <property type="match status" value="1"/>
</dbReference>
<dbReference type="Pfam" id="PF01585">
    <property type="entry name" value="G-patch"/>
    <property type="match status" value="1"/>
</dbReference>
<dbReference type="Pfam" id="PF17069">
    <property type="entry name" value="RSRP"/>
    <property type="match status" value="1"/>
</dbReference>
<dbReference type="SMART" id="SM00443">
    <property type="entry name" value="G_patch"/>
    <property type="match status" value="1"/>
</dbReference>
<dbReference type="SUPFAM" id="SSF54768">
    <property type="entry name" value="dsRNA-binding domain-like"/>
    <property type="match status" value="1"/>
</dbReference>
<dbReference type="SUPFAM" id="SSF50978">
    <property type="entry name" value="WD40 repeat-like"/>
    <property type="match status" value="1"/>
</dbReference>
<dbReference type="PROSITE" id="PS50137">
    <property type="entry name" value="DS_RBD"/>
    <property type="match status" value="1"/>
</dbReference>
<dbReference type="PROSITE" id="PS50174">
    <property type="entry name" value="G_PATCH"/>
    <property type="match status" value="1"/>
</dbReference>
<accession>Q9QX47</accession>
<accession>E3WC91</accession>
<accession>E9PXW2</accession>
<accession>E9Q3H8</accession>
<accession>E9Q3I0</accession>
<accession>E9Q6M4</accession>
<accession>E9Q7G2</accession>
<accession>E9QAR8</accession>
<accession>E9QMT0</accession>
<accession>Q811G3</accession>
<accession>Q9CQ12</accession>
<accession>Q9CQK6</accession>
<accession>Q9QXP5</accession>
<proteinExistence type="evidence at protein level"/>
<comment type="function">
    <text evidence="1 5">RNA-binding protein that acts as a mRNA splicing cofactor by promoting efficient splicing of transcripts that possess weak splice sites. Specifically promotes splicing of many cell-cycle and DNA-repair transcripts that possess weak splice sites, such as TUBG1, KATNB1, TUBGCP2, AURKB, PCNT, AKT1, RAD23A, and FANCG. Probably acts by facilitating the interaction between Serine/arginine-rich proteins such as SRSF2 and the RNA polymerase II. Also binds to DNA; binds to the consensus DNA sequence: 5'-GA[GT]AN[CG][AG]CC-3' (By similarity). Essential for correct RNA splicing of multiple genes critical for brain development, neuronal migration and metabolism, including TUBG1, FLNA, PNKP, WDR62, PSMD3, PCK2, PFKL, IDH2, and ACY1 (By similarity). May also regulate the ghrelin signaling in hypothalamic neuron by acting as a negative regulator of GHSR expression (PubMed:20876580).</text>
</comment>
<comment type="subunit">
    <text evidence="1">Interacts with SRSF2. Associates with the spliceosome. Interacts with USH1G.</text>
</comment>
<comment type="interaction">
    <interactant intactId="EBI-643037">
        <id>Q9QX47</id>
    </interactant>
    <interactant intactId="EBI-743342">
        <id>Q06455</id>
        <label>RUNX1T1</label>
    </interactant>
    <organismsDiffer>true</organismsDiffer>
    <experiments>4</experiments>
</comment>
<comment type="subcellular location">
    <subcellularLocation>
        <location evidence="1">Nucleus speckle</location>
    </subcellularLocation>
    <text evidence="1">Colocalizes with the pre-mRNA splicing factor SRSF2.</text>
</comment>
<comment type="alternative products">
    <event type="alternative splicing"/>
    <isoform>
        <id>Q9QX47-1</id>
        <name>1</name>
        <sequence type="displayed"/>
    </isoform>
    <isoform>
        <id>Q9QX47-2</id>
        <name>2</name>
        <sequence type="described" ref="VSP_004416 VSP_004417"/>
    </isoform>
    <isoform>
        <id>Q9QX47-3</id>
        <name>3</name>
        <sequence type="described" ref="VSP_041557"/>
    </isoform>
    <isoform>
        <id>Q9QX47-4</id>
        <name>4</name>
        <sequence type="described" ref="VSP_041557 VSP_041558"/>
    </isoform>
</comment>
<comment type="tissue specificity">
    <text evidence="5">Widely expressed. Highly expressed in brain, heart, spleen, liver, skeletal muscle, kidney and testis.</text>
</comment>
<comment type="induction">
    <text evidence="5">By leptin. Highly expressed in hypothalamus following leptin injection.</text>
</comment>
<comment type="domain">
    <text>Contains 8 types of repeats which are distributed in 3 regions.</text>
</comment>
<comment type="sequence caution" evidence="8">
    <conflict type="miscellaneous discrepancy">
        <sequence resource="EMBL-CDS" id="AAH46419"/>
    </conflict>
    <text>Contaminating sequence. Potential poly-A sequence.</text>
</comment>
<organism>
    <name type="scientific">Mus musculus</name>
    <name type="common">Mouse</name>
    <dbReference type="NCBI Taxonomy" id="10090"/>
    <lineage>
        <taxon>Eukaryota</taxon>
        <taxon>Metazoa</taxon>
        <taxon>Chordata</taxon>
        <taxon>Craniata</taxon>
        <taxon>Vertebrata</taxon>
        <taxon>Euteleostomi</taxon>
        <taxon>Mammalia</taxon>
        <taxon>Eutheria</taxon>
        <taxon>Euarchontoglires</taxon>
        <taxon>Glires</taxon>
        <taxon>Rodentia</taxon>
        <taxon>Myomorpha</taxon>
        <taxon>Muroidea</taxon>
        <taxon>Muridae</taxon>
        <taxon>Murinae</taxon>
        <taxon>Mus</taxon>
        <taxon>Mus</taxon>
    </lineage>
</organism>
<sequence length="2444" mass="265651">MAADIEQVFRSFVVSKFREIQQELSSGRSEGQLNGETNPPIEGNQAGDTAASARSLPNEEIVQKIEEVLSGVLDTELRYKPDLKEASRKSRCVSVQTDPTDEVPTKKSKKHKKHKNKKKKKKKEKEKKYKRQPEESESKLKSHHDGNLESDSFLKFDSEPSAAALEHPVRAFGLSEASETALVLEPPVVSMEVQESHVLETLKPATKAAELSVVSTSVISEQSEQPMPGMLEPSMTKILDSFTAAPVPMSTAALKSPEPVVTMSVEYQKSVLKSLETMPPETSKTTLVELPIAKVVEPSETLTIVSETPTEVHPEPSPSTMDFPESSTTDVQRLPEQPVEAPSEIADSSMTRPQESLELPKTTAVELQESTVASALELPGPPATSILELQGPPVTPVPELPGPSATPVPELSGPLSTPVPELPGPPATVVPELPGPSVTPVPQLSQELPGPPAPSMGLEPPQEVPEPPVMAQELSGVPAVSAAIELTGQPAVTVAMELTEQPVTTTEFEQPVAMTTVEHPGHPEVTTATGLLGQPEAAMVLELPGQPVATTALELSGQPSVTGVPELSGLPSATRALELSGQSVATGALELPGQLMATGALEFSGQSGAAGALELLGQPLATGVLELPGQPGAPELPGQPVATVALEISVQSVVTTSELSTMTVSQSLEVPSTTALESYNTVAQELPTTLVGETSVTVGVDPLMAQESHMLASNTMETHMLASNTMDSQMLASNTMDSQMLASNTMDSQMLASSTMDSQMLASSTMDSQMLATSTMDSQMLATSSMDSQMLATSSMDSQMLATSSMDSQMLATSSMDSQMLATSSMDSQMLATSSMDSQMLATSSMDSQMLATSSMDSQMLASGAMDSQMLASGTMDAQMLASGTMDAQMLASSTQDSAMMGSKSPDPYRLAQDPYRLAQDPYRLGHDPYRLGHDAYRLGQDPYRLGHDPYRLTPDPYRVSPRPYRIAPRSYRIAPRPYRLAPRPLMLASRRSMMMSYAAERSMMSSYERSMMSYERSMMSPMAERSMMSAYERSMMSAYERSMMSPMAERSMMSAYERSMMSAYERSMMSPMADRSMMSMGADRSMMSSYSAADRSMMSSYSAADRSMMSSYTDRSMMSMAADSYTDSYTDSYTEAYMVPPLPPEEPPTMPPLPPEEPPMTPPLPPEEPPEGPALSTEQSALTADNTWSTEVTLSTGESLSQPEPPVSQSEISEPMAVPANYSMSESETSMLASEAVMTVPEPAREPESSVTSAPVESAVVAEHEMVPERPMTYMVSETTMSVEPAVLTSEASVISETSETYDSMRPSGHAISEVTMSLLEPAVTISQPAENSLELPSMTVPAPSTMTTTESPVVAVTEIPPVAVPEPPIMAVPELPTMAVVKTPAVAVPEPLVAAPEPPTMATPELCSLSVSEPPVAVSELPALADPEHAITAVSGVSSLEPSVPILEPAVSVLQPVMIVSEPSVPVQEPTVAVSEPAVIVSEHTQITSPEMAVESSPVIVDSSVMSSQIMKGMNLLGGDENLGPEVGMQETLLHPGEEPRDGGHLKSDLYENEYDRNADLTVNSHLIVKDAEHNTVCATTVGPVGEASEEKILPISETKEITELATCAAVSEADIGRSLSSQLALELDTVGTSKGFEFVTASALISESKYDVEVSVTTQDTEHDMVISTSPSGGSEADIEGPLPAKDIHLDLPSTNFVCKDVEDSLPIKESAQAVAVALSPKESSEDTEVPLPNKEIVPESGYSASIDEINEADLVRPLLPKDMERLTSLRAGIEGPLLASEVERDKSAASPVVISIPERASESSSEEKDDYEIFVKVKDTHEKSKKNKNRDKGEKEKKRDSSLRSRSKRSKSSEHKSRKRTSESRSRARKRSSKSKSHRSQTRSRSRSRRRRRSSRSRSKSRGRRSVSKEKRKRSPKHRSKSRERKRKRSSSRDNRKAARARSRTPSRRSRSHTPSRRRRSRSVGRRRSFSISPSRRSRTPSRRSRTPSRRSRTPSRRSRTPSRRSRTPSRRRRSRSAVRRRSFSISPVRLRRSRTPLRRRFSRSPIRRKRSRSSERGRSPKRLTDLDKAQLLEIAKANAAAMCAKAGVPLPPNLKPAPPPTIEEKVAKKSGGATIEELTEKCKQIAQSKEDDDVIVNKPHVSDEEEEEPPFYHHPFKLSEPKPIFFNLNIAAAKPTPPKSQVTLTKEFPVSSGSQHRKKEADSVYGEWVPVEKNGEESKDDDNVFSSSLPSEPVDISTAMSERALAQKRLSENAFDLEAMSMLNRAQERIDAWAQLNSIPGQFTGSTGVQVLTQEQLANTGAQAWIKKDQFLRAAPVTGGMGAVLMRKMGWREGEGLGKNKEGNKEPILVDFKTDRKGLVAVGERAQKRSGNFSAAMKDLSGKHPVSALMEICNKRRWQPPEFLLVHDSGPDHRKHFLFRVLRNGSPYQPNCMFFLNRY</sequence>
<name>SON_MOUSE</name>
<feature type="initiator methionine" description="Removed" evidence="1">
    <location>
        <position position="1"/>
    </location>
</feature>
<feature type="chain" id="PRO_0000072038" description="Protein SON">
    <location>
        <begin position="2"/>
        <end position="2444"/>
    </location>
</feature>
<feature type="repeat" description="1-1">
    <location>
        <begin position="1001"/>
        <end position="1006"/>
    </location>
</feature>
<feature type="repeat" description="1-2">
    <location>
        <begin position="1009"/>
        <end position="1014"/>
    </location>
</feature>
<feature type="repeat" description="1-3">
    <location>
        <begin position="1016"/>
        <end position="1021"/>
    </location>
</feature>
<feature type="repeat" description="1-4">
    <location>
        <begin position="1025"/>
        <end position="1030"/>
    </location>
</feature>
<feature type="repeat" description="1-5">
    <location>
        <begin position="1033"/>
        <end position="1038"/>
    </location>
</feature>
<feature type="repeat" description="1-6">
    <location>
        <begin position="1041"/>
        <end position="1046"/>
    </location>
</feature>
<feature type="repeat" description="1-7">
    <location>
        <begin position="1050"/>
        <end position="1055"/>
    </location>
</feature>
<feature type="repeat" description="1-8">
    <location>
        <begin position="1058"/>
        <end position="1063"/>
    </location>
</feature>
<feature type="repeat" description="1-9">
    <location>
        <begin position="1066"/>
        <end position="1071"/>
    </location>
</feature>
<feature type="repeat" description="1-10">
    <location>
        <begin position="1075"/>
        <end position="1080"/>
    </location>
</feature>
<feature type="repeat" description="1-11">
    <location>
        <begin position="1084"/>
        <end position="1089"/>
    </location>
</feature>
<feature type="repeat" description="1-12">
    <location>
        <begin position="1095"/>
        <end position="1100"/>
    </location>
</feature>
<feature type="repeat" description="1-13">
    <location>
        <begin position="1106"/>
        <end position="1111"/>
    </location>
</feature>
<feature type="repeat" description="1-14">
    <location>
        <begin position="1115"/>
        <end position="1120"/>
    </location>
</feature>
<feature type="repeat" description="2-1">
    <location>
        <begin position="1950"/>
        <end position="1956"/>
    </location>
</feature>
<feature type="repeat" description="3-1">
    <location>
        <begin position="1959"/>
        <end position="1977"/>
    </location>
</feature>
<feature type="repeat" description="2-2">
    <location>
        <begin position="1978"/>
        <end position="1984"/>
    </location>
</feature>
<feature type="repeat" description="2-3">
    <location>
        <begin position="1985"/>
        <end position="1991"/>
    </location>
</feature>
<feature type="repeat" description="2-4">
    <location>
        <begin position="1992"/>
        <end position="1998"/>
    </location>
</feature>
<feature type="repeat" description="2-5">
    <location>
        <begin position="1999"/>
        <end position="2005"/>
    </location>
</feature>
<feature type="repeat" description="2-6">
    <location>
        <begin position="2006"/>
        <end position="2012"/>
    </location>
</feature>
<feature type="repeat" description="2-7; approximate">
    <location>
        <begin position="2013"/>
        <end position="2019"/>
    </location>
</feature>
<feature type="repeat" description="3-2; approximate">
    <location>
        <begin position="2020"/>
        <end position="2030"/>
    </location>
</feature>
<feature type="domain" description="G-patch" evidence="2">
    <location>
        <begin position="2323"/>
        <end position="2369"/>
    </location>
</feature>
<feature type="domain" description="DRBM" evidence="3">
    <location>
        <begin position="2389"/>
        <end position="2444"/>
    </location>
</feature>
<feature type="region of interest" description="Disordered" evidence="4">
    <location>
        <begin position="23"/>
        <end position="58"/>
    </location>
</feature>
<feature type="region of interest" description="Disordered" evidence="4">
    <location>
        <begin position="79"/>
        <end position="155"/>
    </location>
</feature>
<feature type="region of interest" description="Disordered" evidence="4">
    <location>
        <begin position="301"/>
        <end position="358"/>
    </location>
</feature>
<feature type="region of interest" description="Disordered" evidence="4">
    <location>
        <begin position="391"/>
        <end position="468"/>
    </location>
</feature>
<feature type="region of interest" description="13 X 10 AA tandem repeats of L-A-[ST]-[NSG]-[TS]-MDSQM">
    <location>
        <begin position="721"/>
        <end position="850"/>
    </location>
</feature>
<feature type="region of interest" description="11 X 7 AA tandem repeats of [DR]-P-Y-R-[LI][AG][QHP]">
    <location>
        <begin position="907"/>
        <end position="983"/>
    </location>
</feature>
<feature type="region of interest" description="14 X 6 AA repeats of [ED]-R-S-M-M-S">
    <location>
        <begin position="1001"/>
        <end position="1120"/>
    </location>
</feature>
<feature type="region of interest" description="Disordered" evidence="4">
    <location>
        <begin position="1141"/>
        <end position="1213"/>
    </location>
</feature>
<feature type="region of interest" description="3 X 11 AA tandem repats of P-P-L-P-P-E-E-P-P-[TME]-[MTG]">
    <location>
        <begin position="1141"/>
        <end position="1173"/>
    </location>
</feature>
<feature type="region of interest" description="Disordered" evidence="4">
    <location>
        <begin position="1802"/>
        <end position="2072"/>
    </location>
</feature>
<feature type="region of interest" description="7 X 7 AA repeats of P-S-R-R-S-R-[TS]">
    <location>
        <begin position="1950"/>
        <end position="2019"/>
    </location>
</feature>
<feature type="region of interest" description="2 X 19 AA repeats of P-S-R-R-R-R-S-R-S-V-V-R-R-R-S-F-S-I-S">
    <location>
        <begin position="1959"/>
        <end position="2030"/>
    </location>
</feature>
<feature type="region of interest" description="3 X tandem repeats of [ST]-P-[VLI]-R-[RL]-[RK]-[RF]-S-R">
    <location>
        <begin position="2031"/>
        <end position="2057"/>
    </location>
</feature>
<feature type="region of interest" description="Disordered" evidence="4">
    <location>
        <begin position="2192"/>
        <end position="2238"/>
    </location>
</feature>
<feature type="compositionally biased region" description="Polar residues" evidence="4">
    <location>
        <begin position="23"/>
        <end position="37"/>
    </location>
</feature>
<feature type="compositionally biased region" description="Basic and acidic residues" evidence="4">
    <location>
        <begin position="79"/>
        <end position="88"/>
    </location>
</feature>
<feature type="compositionally biased region" description="Basic residues" evidence="4">
    <location>
        <begin position="106"/>
        <end position="130"/>
    </location>
</feature>
<feature type="compositionally biased region" description="Basic and acidic residues" evidence="4">
    <location>
        <begin position="131"/>
        <end position="155"/>
    </location>
</feature>
<feature type="compositionally biased region" description="Pro residues" evidence="4">
    <location>
        <begin position="393"/>
        <end position="406"/>
    </location>
</feature>
<feature type="compositionally biased region" description="Pro residues" evidence="4">
    <location>
        <begin position="420"/>
        <end position="439"/>
    </location>
</feature>
<feature type="compositionally biased region" description="Pro residues" evidence="4">
    <location>
        <begin position="1141"/>
        <end position="1168"/>
    </location>
</feature>
<feature type="compositionally biased region" description="Polar residues" evidence="4">
    <location>
        <begin position="1177"/>
        <end position="1213"/>
    </location>
</feature>
<feature type="compositionally biased region" description="Basic and acidic residues" evidence="4">
    <location>
        <begin position="1815"/>
        <end position="1826"/>
    </location>
</feature>
<feature type="compositionally biased region" description="Basic and acidic residues" evidence="4">
    <location>
        <begin position="1834"/>
        <end position="1847"/>
    </location>
</feature>
<feature type="compositionally biased region" description="Basic and acidic residues" evidence="4">
    <location>
        <begin position="1855"/>
        <end position="1870"/>
    </location>
</feature>
<feature type="compositionally biased region" description="Basic residues" evidence="4">
    <location>
        <begin position="1871"/>
        <end position="1934"/>
    </location>
</feature>
<feature type="compositionally biased region" description="Basic residues" evidence="4">
    <location>
        <begin position="1942"/>
        <end position="1973"/>
    </location>
</feature>
<feature type="compositionally biased region" description="Basic residues" evidence="4">
    <location>
        <begin position="1980"/>
        <end position="2027"/>
    </location>
</feature>
<feature type="compositionally biased region" description="Basic residues" evidence="4">
    <location>
        <begin position="2034"/>
        <end position="2056"/>
    </location>
</feature>
<feature type="compositionally biased region" description="Basic and acidic residues" evidence="4">
    <location>
        <begin position="2057"/>
        <end position="2072"/>
    </location>
</feature>
<feature type="modified residue" description="N-acetylalanine" evidence="1">
    <location>
        <position position="2"/>
    </location>
</feature>
<feature type="modified residue" description="N6-acetyllysine" evidence="1">
    <location>
        <position position="16"/>
    </location>
</feature>
<feature type="modified residue" description="Phosphoserine" evidence="1">
    <location>
        <position position="94"/>
    </location>
</feature>
<feature type="modified residue" description="Phosphoserine" evidence="1">
    <location>
        <position position="142"/>
    </location>
</feature>
<feature type="modified residue" description="Phosphoserine" evidence="1">
    <location>
        <position position="150"/>
    </location>
</feature>
<feature type="modified residue" description="Phosphoserine" evidence="1">
    <location>
        <position position="152"/>
    </location>
</feature>
<feature type="modified residue" description="Phosphoserine" evidence="1">
    <location>
        <position position="158"/>
    </location>
</feature>
<feature type="modified residue" description="N6-acetyllysine" evidence="1">
    <location>
        <position position="284"/>
    </location>
</feature>
<feature type="modified residue" description="Phosphothreonine" evidence="1">
    <location>
        <position position="395"/>
    </location>
</feature>
<feature type="modified residue" description="Omega-N-methylarginine" evidence="1">
    <location>
        <position position="945"/>
    </location>
</feature>
<feature type="modified residue" description="Phosphothreonine" evidence="1">
    <location>
        <position position="954"/>
    </location>
</feature>
<feature type="modified residue" description="Phosphoserine" evidence="11">
    <location>
        <position position="993"/>
    </location>
</feature>
<feature type="modified residue" description="Asymmetric dimethylarginine" evidence="13">
    <location>
        <position position="1002"/>
    </location>
</feature>
<feature type="modified residue" description="Asymmetric dimethylarginine" evidence="13">
    <location>
        <position position="1017"/>
    </location>
</feature>
<feature type="modified residue" description="Phosphoserine" evidence="1">
    <location>
        <position position="1030"/>
    </location>
</feature>
<feature type="modified residue" description="Phosphoserine" evidence="1">
    <location>
        <position position="1038"/>
    </location>
</feature>
<feature type="modified residue" description="Phosphoserine" evidence="1">
    <location>
        <position position="1055"/>
    </location>
</feature>
<feature type="modified residue" description="Phosphoserine" evidence="1">
    <location>
        <position position="1063"/>
    </location>
</feature>
<feature type="modified residue" description="Phosphoserine" evidence="1">
    <location>
        <position position="1077"/>
    </location>
</feature>
<feature type="modified residue" description="Phosphoserine" evidence="1">
    <location>
        <position position="1678"/>
    </location>
</feature>
<feature type="modified residue" description="Phosphoserine" evidence="9 10 11">
    <location>
        <position position="1723"/>
    </location>
</feature>
<feature type="modified residue" description="Phosphoserine" evidence="1">
    <location>
        <position position="1727"/>
    </location>
</feature>
<feature type="modified residue" description="Phosphoserine" evidence="1">
    <location>
        <position position="1772"/>
    </location>
</feature>
<feature type="modified residue" description="Phosphoserine" evidence="1">
    <location>
        <position position="1784"/>
    </location>
</feature>
<feature type="modified residue" description="Phosphoserine" evidence="1">
    <location>
        <position position="1791"/>
    </location>
</feature>
<feature type="modified residue" description="Phosphoserine" evidence="1">
    <location>
        <position position="1794"/>
    </location>
</feature>
<feature type="modified residue" description="Phosphoserine" evidence="1">
    <location>
        <position position="1807"/>
    </location>
</feature>
<feature type="modified residue" description="Phosphoserine" evidence="1">
    <location>
        <position position="1808"/>
    </location>
</feature>
<feature type="modified residue" description="Phosphoserine" evidence="1">
    <location>
        <position position="1973"/>
    </location>
</feature>
<feature type="modified residue" description="Phosphoserine" evidence="1">
    <location>
        <position position="1975"/>
    </location>
</feature>
<feature type="modified residue" description="Phosphoserine" evidence="1">
    <location>
        <position position="1977"/>
    </location>
</feature>
<feature type="modified residue" description="Phosphoserine" evidence="1">
    <location>
        <position position="2027"/>
    </location>
</feature>
<feature type="modified residue" description="Phosphoserine" evidence="1">
    <location>
        <position position="2029"/>
    </location>
</feature>
<feature type="modified residue" description="Phosphoserine" evidence="1">
    <location>
        <position position="2031"/>
    </location>
</feature>
<feature type="modified residue" description="Phosphoserine" evidence="1">
    <location>
        <position position="2047"/>
    </location>
</feature>
<feature type="modified residue" description="Phosphoserine" evidence="1">
    <location>
        <position position="2049"/>
    </location>
</feature>
<feature type="modified residue" description="N6-acetyllysine; alternate" evidence="12">
    <location>
        <position position="2073"/>
    </location>
</feature>
<feature type="modified residue" description="Phosphoserine" evidence="11">
    <location>
        <position position="2147"/>
    </location>
</feature>
<feature type="modified residue" description="Phosphothreonine" evidence="1">
    <location>
        <position position="2181"/>
    </location>
</feature>
<feature type="modified residue" description="Phosphoserine" evidence="11">
    <location>
        <position position="2256"/>
    </location>
</feature>
<feature type="cross-link" description="Glycyl lysine isopeptide (Lys-Gly) (interchain with G-Cter in SUMO2)" evidence="1">
    <location>
        <position position="64"/>
    </location>
</feature>
<feature type="cross-link" description="Glycyl lysine isopeptide (Lys-Gly) (interchain with G-Cter in SUMO2); alternate" evidence="1">
    <location>
        <position position="2073"/>
    </location>
</feature>
<feature type="cross-link" description="Glycyl lysine isopeptide (Lys-Gly) (interchain with G-Cter in SUMO2)" evidence="1">
    <location>
        <position position="2110"/>
    </location>
</feature>
<feature type="cross-link" description="Glycyl lysine isopeptide (Lys-Gly) (interchain with G-Cter in SUMO2)" evidence="1">
    <location>
        <position position="2167"/>
    </location>
</feature>
<feature type="splice variant" id="VSP_041557" description="In isoform 3 and isoform 4." evidence="6 7">
    <location>
        <begin position="776"/>
        <end position="815"/>
    </location>
</feature>
<feature type="splice variant" id="VSP_004416" description="In isoform 2." evidence="8">
    <original>K</original>
    <variation>F</variation>
    <location>
        <position position="2126"/>
    </location>
</feature>
<feature type="splice variant" id="VSP_004417" description="In isoform 2." evidence="8">
    <location>
        <begin position="2127"/>
        <end position="2444"/>
    </location>
</feature>
<feature type="splice variant" id="VSP_041558" description="In isoform 4." evidence="7">
    <original>PVDISTAMSERALAQKRLSENAFDLEAMSMLNRAQERIDAWAQLNSIPGQFTGSTGVQVLTQEQLANTGAQAWIKKDQFLRAAPVTGGMGAVLMRKMGWREGEGLGKNKEGNKEPILVDFKTDRKGLVAVGERAQKRSGNFSAAMKDLSGKHPVSALMEICNKRRWQPPEFLLVHDSGPDHRKHFLFRVLRNGSPYQPNCMFFLNRY</original>
    <variation>GRVKRQGRVKRQMKQPAASHLTVTRCNSLCGTKPQSEKHRIAEKSVITSLPNIGPSMHLWEGSPRYNYLASRFASRLYSSRFWW</variation>
    <location>
        <begin position="2238"/>
        <end position="2444"/>
    </location>
</feature>
<feature type="sequence conflict" description="In Ref. 1; AAF23120/AAF23121 and 2; BAJ40169." evidence="8" ref="1 2">
    <original>D</original>
    <variation>E</variation>
    <location>
        <position position="857"/>
    </location>
</feature>
<feature type="sequence conflict" description="In Ref. 1; AAF23120/AAF23121." evidence="8" ref="1">
    <original>N</original>
    <variation>D</variation>
    <location>
        <position position="1333"/>
    </location>
</feature>
<feature type="sequence conflict" description="In Ref. 1; AAF23120/AAF23121." evidence="8" ref="1">
    <original>P</original>
    <variation>L</variation>
    <location>
        <position position="1734"/>
    </location>
</feature>
<feature type="sequence conflict" description="In Ref. 1; AAF23120/AAF23121." evidence="8" ref="1">
    <original>R</original>
    <variation>I</variation>
    <location>
        <position position="1966"/>
    </location>
</feature>
<gene>
    <name type="primary">Son</name>
    <name type="synonym">Nrebp</name>
</gene>
<protein>
    <recommendedName>
        <fullName>Protein SON</fullName>
    </recommendedName>
    <alternativeName>
        <fullName>Negative regulatory element-binding protein</fullName>
        <shortName>NRE-binding protein</shortName>
    </alternativeName>
</protein>